<keyword id="KW-0963">Cytoplasm</keyword>
<keyword id="KW-0251">Elongation factor</keyword>
<keyword id="KW-0379">Hydroxylation</keyword>
<keyword id="KW-0648">Protein biosynthesis</keyword>
<keyword id="KW-1185">Reference proteome</keyword>
<protein>
    <recommendedName>
        <fullName evidence="1">Elongation factor P</fullName>
        <shortName evidence="1">EF-P</shortName>
    </recommendedName>
</protein>
<name>EFP_ACIF2</name>
<evidence type="ECO:0000255" key="1">
    <source>
        <dbReference type="HAMAP-Rule" id="MF_00141"/>
    </source>
</evidence>
<feature type="chain" id="PRO_1000117882" description="Elongation factor P">
    <location>
        <begin position="1"/>
        <end position="186"/>
    </location>
</feature>
<feature type="modified residue" description="N6-(3,6-diaminohexanoyl)-5-hydroxylysine" evidence="1">
    <location>
        <position position="33"/>
    </location>
</feature>
<sequence length="186" mass="20767">MKISAFDIRPGNILEYEKGLWRVLKTDFVKPGKGGAFVQVEMKNIETGTKSNTRFRSGEAMEKAVVEPRTMQYLYADATGYVFMDNENFEQLILSEDLLEGQTGYLLPNTEIQVNLHNERPIGVELPPVVILEVREAEPSIKGQTATGSYKSAQMETGITVMVPQFVNAGEKIRVNTVDGSYIDRA</sequence>
<comment type="function">
    <text evidence="1">Involved in peptide bond synthesis. Alleviates ribosome stalling that occurs when 3 or more consecutive Pro residues or the sequence PPG is present in a protein, possibly by augmenting the peptidyl transferase activity of the ribosome. Modification of Lys-33 is required for alleviation.</text>
</comment>
<comment type="pathway">
    <text evidence="1">Protein biosynthesis; polypeptide chain elongation.</text>
</comment>
<comment type="subcellular location">
    <subcellularLocation>
        <location evidence="1">Cytoplasm</location>
    </subcellularLocation>
</comment>
<comment type="PTM">
    <text evidence="1">May be beta-lysylated on the epsilon-amino group of Lys-33 by the combined action of EpmA and EpmB, and then hydroxylated on the C5 position of the same residue by EpmC (if this protein is present). Lysylation is critical for the stimulatory effect of EF-P on peptide-bond formation. The lysylation moiety may extend toward the peptidyltransferase center and stabilize the terminal 3-CCA end of the tRNA. Hydroxylation of the C5 position on Lys-33 may allow additional potential stabilizing hydrogen-bond interactions with the P-tRNA.</text>
</comment>
<comment type="similarity">
    <text evidence="1">Belongs to the elongation factor P family.</text>
</comment>
<reference key="1">
    <citation type="journal article" date="2008" name="BMC Genomics">
        <title>Acidithiobacillus ferrooxidans metabolism: from genome sequence to industrial applications.</title>
        <authorList>
            <person name="Valdes J."/>
            <person name="Pedroso I."/>
            <person name="Quatrini R."/>
            <person name="Dodson R.J."/>
            <person name="Tettelin H."/>
            <person name="Blake R. II"/>
            <person name="Eisen J.A."/>
            <person name="Holmes D.S."/>
        </authorList>
    </citation>
    <scope>NUCLEOTIDE SEQUENCE [LARGE SCALE GENOMIC DNA]</scope>
    <source>
        <strain>ATCC 23270 / DSM 14882 / CIP 104768 / NCIMB 8455</strain>
    </source>
</reference>
<gene>
    <name evidence="1" type="primary">efp</name>
    <name type="ordered locus">AFE_0851</name>
</gene>
<dbReference type="EMBL" id="CP001219">
    <property type="protein sequence ID" value="ACK78221.1"/>
    <property type="molecule type" value="Genomic_DNA"/>
</dbReference>
<dbReference type="RefSeq" id="WP_012536394.1">
    <property type="nucleotide sequence ID" value="NC_011761.1"/>
</dbReference>
<dbReference type="SMR" id="B7J6R6"/>
<dbReference type="STRING" id="243159.AFE_0851"/>
<dbReference type="PaxDb" id="243159-AFE_0851"/>
<dbReference type="GeneID" id="65280178"/>
<dbReference type="KEGG" id="afr:AFE_0851"/>
<dbReference type="eggNOG" id="COG0231">
    <property type="taxonomic scope" value="Bacteria"/>
</dbReference>
<dbReference type="HOGENOM" id="CLU_074944_1_1_6"/>
<dbReference type="UniPathway" id="UPA00345"/>
<dbReference type="Proteomes" id="UP000001362">
    <property type="component" value="Chromosome"/>
</dbReference>
<dbReference type="GO" id="GO:0005737">
    <property type="term" value="C:cytoplasm"/>
    <property type="evidence" value="ECO:0007669"/>
    <property type="project" value="UniProtKB-SubCell"/>
</dbReference>
<dbReference type="GO" id="GO:0003746">
    <property type="term" value="F:translation elongation factor activity"/>
    <property type="evidence" value="ECO:0007669"/>
    <property type="project" value="UniProtKB-UniRule"/>
</dbReference>
<dbReference type="GO" id="GO:0043043">
    <property type="term" value="P:peptide biosynthetic process"/>
    <property type="evidence" value="ECO:0007669"/>
    <property type="project" value="InterPro"/>
</dbReference>
<dbReference type="CDD" id="cd04470">
    <property type="entry name" value="S1_EF-P_repeat_1"/>
    <property type="match status" value="1"/>
</dbReference>
<dbReference type="CDD" id="cd05794">
    <property type="entry name" value="S1_EF-P_repeat_2"/>
    <property type="match status" value="1"/>
</dbReference>
<dbReference type="FunFam" id="2.30.30.30:FF:000003">
    <property type="entry name" value="Elongation factor P"/>
    <property type="match status" value="1"/>
</dbReference>
<dbReference type="FunFam" id="2.40.50.140:FF:000004">
    <property type="entry name" value="Elongation factor P"/>
    <property type="match status" value="1"/>
</dbReference>
<dbReference type="FunFam" id="2.40.50.140:FF:000009">
    <property type="entry name" value="Elongation factor P"/>
    <property type="match status" value="1"/>
</dbReference>
<dbReference type="Gene3D" id="2.30.30.30">
    <property type="match status" value="1"/>
</dbReference>
<dbReference type="Gene3D" id="2.40.50.140">
    <property type="entry name" value="Nucleic acid-binding proteins"/>
    <property type="match status" value="2"/>
</dbReference>
<dbReference type="HAMAP" id="MF_00141">
    <property type="entry name" value="EF_P"/>
    <property type="match status" value="1"/>
</dbReference>
<dbReference type="InterPro" id="IPR015365">
    <property type="entry name" value="Elong-fact-P_C"/>
</dbReference>
<dbReference type="InterPro" id="IPR012340">
    <property type="entry name" value="NA-bd_OB-fold"/>
</dbReference>
<dbReference type="InterPro" id="IPR014722">
    <property type="entry name" value="Rib_uL2_dom2"/>
</dbReference>
<dbReference type="InterPro" id="IPR020599">
    <property type="entry name" value="Transl_elong_fac_P/YeiP"/>
</dbReference>
<dbReference type="InterPro" id="IPR013185">
    <property type="entry name" value="Transl_elong_KOW-like"/>
</dbReference>
<dbReference type="InterPro" id="IPR001059">
    <property type="entry name" value="Transl_elong_P/YeiP_cen"/>
</dbReference>
<dbReference type="InterPro" id="IPR013852">
    <property type="entry name" value="Transl_elong_P/YeiP_CS"/>
</dbReference>
<dbReference type="InterPro" id="IPR011768">
    <property type="entry name" value="Transl_elongation_fac_P"/>
</dbReference>
<dbReference type="InterPro" id="IPR008991">
    <property type="entry name" value="Translation_prot_SH3-like_sf"/>
</dbReference>
<dbReference type="NCBIfam" id="TIGR00038">
    <property type="entry name" value="efp"/>
    <property type="match status" value="1"/>
</dbReference>
<dbReference type="NCBIfam" id="NF001810">
    <property type="entry name" value="PRK00529.1"/>
    <property type="match status" value="1"/>
</dbReference>
<dbReference type="PANTHER" id="PTHR30053">
    <property type="entry name" value="ELONGATION FACTOR P"/>
    <property type="match status" value="1"/>
</dbReference>
<dbReference type="PANTHER" id="PTHR30053:SF14">
    <property type="entry name" value="TRANSLATION ELONGATION FACTOR KOW-LIKE DOMAIN-CONTAINING PROTEIN"/>
    <property type="match status" value="1"/>
</dbReference>
<dbReference type="Pfam" id="PF01132">
    <property type="entry name" value="EFP"/>
    <property type="match status" value="1"/>
</dbReference>
<dbReference type="Pfam" id="PF08207">
    <property type="entry name" value="EFP_N"/>
    <property type="match status" value="1"/>
</dbReference>
<dbReference type="Pfam" id="PF09285">
    <property type="entry name" value="Elong-fact-P_C"/>
    <property type="match status" value="1"/>
</dbReference>
<dbReference type="PIRSF" id="PIRSF005901">
    <property type="entry name" value="EF-P"/>
    <property type="match status" value="1"/>
</dbReference>
<dbReference type="SMART" id="SM01185">
    <property type="entry name" value="EFP"/>
    <property type="match status" value="1"/>
</dbReference>
<dbReference type="SMART" id="SM00841">
    <property type="entry name" value="Elong-fact-P_C"/>
    <property type="match status" value="1"/>
</dbReference>
<dbReference type="SUPFAM" id="SSF50249">
    <property type="entry name" value="Nucleic acid-binding proteins"/>
    <property type="match status" value="2"/>
</dbReference>
<dbReference type="SUPFAM" id="SSF50104">
    <property type="entry name" value="Translation proteins SH3-like domain"/>
    <property type="match status" value="1"/>
</dbReference>
<dbReference type="PROSITE" id="PS01275">
    <property type="entry name" value="EFP"/>
    <property type="match status" value="1"/>
</dbReference>
<proteinExistence type="inferred from homology"/>
<organism>
    <name type="scientific">Acidithiobacillus ferrooxidans (strain ATCC 23270 / DSM 14882 / CIP 104768 / NCIMB 8455)</name>
    <name type="common">Ferrobacillus ferrooxidans (strain ATCC 23270)</name>
    <dbReference type="NCBI Taxonomy" id="243159"/>
    <lineage>
        <taxon>Bacteria</taxon>
        <taxon>Pseudomonadati</taxon>
        <taxon>Pseudomonadota</taxon>
        <taxon>Acidithiobacillia</taxon>
        <taxon>Acidithiobacillales</taxon>
        <taxon>Acidithiobacillaceae</taxon>
        <taxon>Acidithiobacillus</taxon>
    </lineage>
</organism>
<accession>B7J6R6</accession>